<sequence>MNKNKPFIVVIVGPTASGKTELSIELAKRINGEIISGDSMQVYKHMNIGTAKVTPEEMDGIPHHLIDILNPDDTFSAYEFKRLAEDLITDITNRGKVPIIAGGTGLYIQSLIYNYELEDETVTPAQLSIVKQKLSALEHLDNQQLHDYLAQFDAVSAENIHPNNRQRVLRAIEYYLKTKKLLSNRKKVQQFTENYDTLLLGIEMSRKTLYSRINKRVDIMLDHGLFREVQQLVEQGYESCQSMQAIGYKELIPVINGQMIYEDAVNDLKQHSRQYAKRQMTWFKNKMSVHWLDKENMSLQMMLDEITTQIK</sequence>
<feature type="chain" id="PRO_1000077406" description="tRNA dimethylallyltransferase">
    <location>
        <begin position="1"/>
        <end position="311"/>
    </location>
</feature>
<feature type="region of interest" description="Interaction with substrate tRNA" evidence="1">
    <location>
        <begin position="38"/>
        <end position="41"/>
    </location>
</feature>
<feature type="region of interest" description="Interaction with substrate tRNA" evidence="1">
    <location>
        <begin position="166"/>
        <end position="170"/>
    </location>
</feature>
<feature type="binding site" evidence="1">
    <location>
        <begin position="13"/>
        <end position="20"/>
    </location>
    <ligand>
        <name>ATP</name>
        <dbReference type="ChEBI" id="CHEBI:30616"/>
    </ligand>
</feature>
<feature type="binding site" evidence="1">
    <location>
        <begin position="15"/>
        <end position="20"/>
    </location>
    <ligand>
        <name>substrate</name>
    </ligand>
</feature>
<feature type="site" description="Interaction with substrate tRNA" evidence="1">
    <location>
        <position position="104"/>
    </location>
</feature>
<gene>
    <name evidence="1" type="primary">miaA</name>
    <name type="ordered locus">USA300HOU_1234</name>
</gene>
<comment type="function">
    <text evidence="1">Catalyzes the transfer of a dimethylallyl group onto the adenine at position 37 in tRNAs that read codons beginning with uridine, leading to the formation of N6-(dimethylallyl)adenosine (i(6)A).</text>
</comment>
<comment type="catalytic activity">
    <reaction evidence="1">
        <text>adenosine(37) in tRNA + dimethylallyl diphosphate = N(6)-dimethylallyladenosine(37) in tRNA + diphosphate</text>
        <dbReference type="Rhea" id="RHEA:26482"/>
        <dbReference type="Rhea" id="RHEA-COMP:10162"/>
        <dbReference type="Rhea" id="RHEA-COMP:10375"/>
        <dbReference type="ChEBI" id="CHEBI:33019"/>
        <dbReference type="ChEBI" id="CHEBI:57623"/>
        <dbReference type="ChEBI" id="CHEBI:74411"/>
        <dbReference type="ChEBI" id="CHEBI:74415"/>
        <dbReference type="EC" id="2.5.1.75"/>
    </reaction>
</comment>
<comment type="cofactor">
    <cofactor evidence="1">
        <name>Mg(2+)</name>
        <dbReference type="ChEBI" id="CHEBI:18420"/>
    </cofactor>
</comment>
<comment type="subunit">
    <text evidence="1">Monomer.</text>
</comment>
<comment type="similarity">
    <text evidence="1">Belongs to the IPP transferase family.</text>
</comment>
<keyword id="KW-0067">ATP-binding</keyword>
<keyword id="KW-0460">Magnesium</keyword>
<keyword id="KW-0547">Nucleotide-binding</keyword>
<keyword id="KW-0808">Transferase</keyword>
<keyword id="KW-0819">tRNA processing</keyword>
<protein>
    <recommendedName>
        <fullName evidence="1">tRNA dimethylallyltransferase</fullName>
        <ecNumber evidence="1">2.5.1.75</ecNumber>
    </recommendedName>
    <alternativeName>
        <fullName evidence="1">Dimethylallyl diphosphate:tRNA dimethylallyltransferase</fullName>
        <shortName evidence="1">DMAPP:tRNA dimethylallyltransferase</shortName>
        <shortName evidence="1">DMATase</shortName>
    </alternativeName>
    <alternativeName>
        <fullName evidence="1">Isopentenyl-diphosphate:tRNA isopentenyltransferase</fullName>
        <shortName evidence="1">IPP transferase</shortName>
        <shortName evidence="1">IPPT</shortName>
        <shortName evidence="1">IPTase</shortName>
    </alternativeName>
</protein>
<proteinExistence type="inferred from homology"/>
<dbReference type="EC" id="2.5.1.75" evidence="1"/>
<dbReference type="EMBL" id="CP000730">
    <property type="protein sequence ID" value="ABX29248.1"/>
    <property type="molecule type" value="Genomic_DNA"/>
</dbReference>
<dbReference type="RefSeq" id="WP_001548613.1">
    <property type="nucleotide sequence ID" value="NC_010079.1"/>
</dbReference>
<dbReference type="SMR" id="A8Z1X3"/>
<dbReference type="KEGG" id="sax:USA300HOU_1234"/>
<dbReference type="HOGENOM" id="CLU_032616_0_1_9"/>
<dbReference type="GO" id="GO:0005524">
    <property type="term" value="F:ATP binding"/>
    <property type="evidence" value="ECO:0007669"/>
    <property type="project" value="UniProtKB-UniRule"/>
</dbReference>
<dbReference type="GO" id="GO:0052381">
    <property type="term" value="F:tRNA dimethylallyltransferase activity"/>
    <property type="evidence" value="ECO:0007669"/>
    <property type="project" value="UniProtKB-UniRule"/>
</dbReference>
<dbReference type="GO" id="GO:0006400">
    <property type="term" value="P:tRNA modification"/>
    <property type="evidence" value="ECO:0007669"/>
    <property type="project" value="TreeGrafter"/>
</dbReference>
<dbReference type="FunFam" id="1.10.20.140:FF:000004">
    <property type="entry name" value="tRNA dimethylallyltransferase"/>
    <property type="match status" value="1"/>
</dbReference>
<dbReference type="Gene3D" id="1.10.20.140">
    <property type="match status" value="1"/>
</dbReference>
<dbReference type="Gene3D" id="3.40.50.300">
    <property type="entry name" value="P-loop containing nucleotide triphosphate hydrolases"/>
    <property type="match status" value="1"/>
</dbReference>
<dbReference type="HAMAP" id="MF_00185">
    <property type="entry name" value="IPP_trans"/>
    <property type="match status" value="1"/>
</dbReference>
<dbReference type="InterPro" id="IPR039657">
    <property type="entry name" value="Dimethylallyltransferase"/>
</dbReference>
<dbReference type="InterPro" id="IPR018022">
    <property type="entry name" value="IPT"/>
</dbReference>
<dbReference type="InterPro" id="IPR027417">
    <property type="entry name" value="P-loop_NTPase"/>
</dbReference>
<dbReference type="NCBIfam" id="TIGR00174">
    <property type="entry name" value="miaA"/>
    <property type="match status" value="1"/>
</dbReference>
<dbReference type="PANTHER" id="PTHR11088">
    <property type="entry name" value="TRNA DIMETHYLALLYLTRANSFERASE"/>
    <property type="match status" value="1"/>
</dbReference>
<dbReference type="PANTHER" id="PTHR11088:SF60">
    <property type="entry name" value="TRNA DIMETHYLALLYLTRANSFERASE"/>
    <property type="match status" value="1"/>
</dbReference>
<dbReference type="Pfam" id="PF01715">
    <property type="entry name" value="IPPT"/>
    <property type="match status" value="1"/>
</dbReference>
<dbReference type="SUPFAM" id="SSF52540">
    <property type="entry name" value="P-loop containing nucleoside triphosphate hydrolases"/>
    <property type="match status" value="2"/>
</dbReference>
<evidence type="ECO:0000255" key="1">
    <source>
        <dbReference type="HAMAP-Rule" id="MF_00185"/>
    </source>
</evidence>
<reference key="1">
    <citation type="journal article" date="2007" name="BMC Microbiol.">
        <title>Subtle genetic changes enhance virulence of methicillin resistant and sensitive Staphylococcus aureus.</title>
        <authorList>
            <person name="Highlander S.K."/>
            <person name="Hulten K.G."/>
            <person name="Qin X."/>
            <person name="Jiang H."/>
            <person name="Yerrapragada S."/>
            <person name="Mason E.O. Jr."/>
            <person name="Shang Y."/>
            <person name="Williams T.M."/>
            <person name="Fortunov R.M."/>
            <person name="Liu Y."/>
            <person name="Igboeli O."/>
            <person name="Petrosino J."/>
            <person name="Tirumalai M."/>
            <person name="Uzman A."/>
            <person name="Fox G.E."/>
            <person name="Cardenas A.M."/>
            <person name="Muzny D.M."/>
            <person name="Hemphill L."/>
            <person name="Ding Y."/>
            <person name="Dugan S."/>
            <person name="Blyth P.R."/>
            <person name="Buhay C.J."/>
            <person name="Dinh H.H."/>
            <person name="Hawes A.C."/>
            <person name="Holder M."/>
            <person name="Kovar C.L."/>
            <person name="Lee S.L."/>
            <person name="Liu W."/>
            <person name="Nazareth L.V."/>
            <person name="Wang Q."/>
            <person name="Zhou J."/>
            <person name="Kaplan S.L."/>
            <person name="Weinstock G.M."/>
        </authorList>
    </citation>
    <scope>NUCLEOTIDE SEQUENCE [LARGE SCALE GENOMIC DNA]</scope>
    <source>
        <strain>USA300 / TCH1516</strain>
    </source>
</reference>
<name>MIAA_STAAT</name>
<organism>
    <name type="scientific">Staphylococcus aureus (strain USA300 / TCH1516)</name>
    <dbReference type="NCBI Taxonomy" id="451516"/>
    <lineage>
        <taxon>Bacteria</taxon>
        <taxon>Bacillati</taxon>
        <taxon>Bacillota</taxon>
        <taxon>Bacilli</taxon>
        <taxon>Bacillales</taxon>
        <taxon>Staphylococcaceae</taxon>
        <taxon>Staphylococcus</taxon>
    </lineage>
</organism>
<accession>A8Z1X3</accession>